<name>ISPH_HAEIN</name>
<keyword id="KW-0004">4Fe-4S</keyword>
<keyword id="KW-0408">Iron</keyword>
<keyword id="KW-0411">Iron-sulfur</keyword>
<keyword id="KW-0414">Isoprene biosynthesis</keyword>
<keyword id="KW-0479">Metal-binding</keyword>
<keyword id="KW-0560">Oxidoreductase</keyword>
<keyword id="KW-1185">Reference proteome</keyword>
<reference key="1">
    <citation type="journal article" date="1995" name="Science">
        <title>Whole-genome random sequencing and assembly of Haemophilus influenzae Rd.</title>
        <authorList>
            <person name="Fleischmann R.D."/>
            <person name="Adams M.D."/>
            <person name="White O."/>
            <person name="Clayton R.A."/>
            <person name="Kirkness E.F."/>
            <person name="Kerlavage A.R."/>
            <person name="Bult C.J."/>
            <person name="Tomb J.-F."/>
            <person name="Dougherty B.A."/>
            <person name="Merrick J.M."/>
            <person name="McKenney K."/>
            <person name="Sutton G.G."/>
            <person name="FitzHugh W."/>
            <person name="Fields C.A."/>
            <person name="Gocayne J.D."/>
            <person name="Scott J.D."/>
            <person name="Shirley R."/>
            <person name="Liu L.-I."/>
            <person name="Glodek A."/>
            <person name="Kelley J.M."/>
            <person name="Weidman J.F."/>
            <person name="Phillips C.A."/>
            <person name="Spriggs T."/>
            <person name="Hedblom E."/>
            <person name="Cotton M.D."/>
            <person name="Utterback T.R."/>
            <person name="Hanna M.C."/>
            <person name="Nguyen D.T."/>
            <person name="Saudek D.M."/>
            <person name="Brandon R.C."/>
            <person name="Fine L.D."/>
            <person name="Fritchman J.L."/>
            <person name="Fuhrmann J.L."/>
            <person name="Geoghagen N.S.M."/>
            <person name="Gnehm C.L."/>
            <person name="McDonald L.A."/>
            <person name="Small K.V."/>
            <person name="Fraser C.M."/>
            <person name="Smith H.O."/>
            <person name="Venter J.C."/>
        </authorList>
    </citation>
    <scope>NUCLEOTIDE SEQUENCE [LARGE SCALE GENOMIC DNA]</scope>
    <source>
        <strain>ATCC 51907 / DSM 11121 / KW20 / Rd</strain>
    </source>
</reference>
<evidence type="ECO:0000255" key="1">
    <source>
        <dbReference type="HAMAP-Rule" id="MF_00191"/>
    </source>
</evidence>
<dbReference type="EC" id="1.17.7.4" evidence="1"/>
<dbReference type="EMBL" id="L42023">
    <property type="protein sequence ID" value="AAC22668.1"/>
    <property type="molecule type" value="Genomic_DNA"/>
</dbReference>
<dbReference type="RefSeq" id="NP_439168.1">
    <property type="nucleotide sequence ID" value="NC_000907.1"/>
</dbReference>
<dbReference type="SMR" id="P44976"/>
<dbReference type="STRING" id="71421.HI_1007"/>
<dbReference type="EnsemblBacteria" id="AAC22668">
    <property type="protein sequence ID" value="AAC22668"/>
    <property type="gene ID" value="HI_1007"/>
</dbReference>
<dbReference type="KEGG" id="hin:HI_1007"/>
<dbReference type="PATRIC" id="fig|71421.8.peg.1050"/>
<dbReference type="eggNOG" id="COG0761">
    <property type="taxonomic scope" value="Bacteria"/>
</dbReference>
<dbReference type="HOGENOM" id="CLU_027486_1_0_6"/>
<dbReference type="OrthoDB" id="9804068at2"/>
<dbReference type="PhylomeDB" id="P44976"/>
<dbReference type="BioCyc" id="HINF71421:G1GJ1-1047-MONOMER"/>
<dbReference type="UniPathway" id="UPA00056">
    <property type="reaction ID" value="UER00097"/>
</dbReference>
<dbReference type="UniPathway" id="UPA00059">
    <property type="reaction ID" value="UER00105"/>
</dbReference>
<dbReference type="Proteomes" id="UP000000579">
    <property type="component" value="Chromosome"/>
</dbReference>
<dbReference type="GO" id="GO:0005829">
    <property type="term" value="C:cytosol"/>
    <property type="evidence" value="ECO:0000318"/>
    <property type="project" value="GO_Central"/>
</dbReference>
<dbReference type="GO" id="GO:0051539">
    <property type="term" value="F:4 iron, 4 sulfur cluster binding"/>
    <property type="evidence" value="ECO:0007669"/>
    <property type="project" value="UniProtKB-UniRule"/>
</dbReference>
<dbReference type="GO" id="GO:0051745">
    <property type="term" value="F:4-hydroxy-3-methylbut-2-enyl diphosphate reductase activity"/>
    <property type="evidence" value="ECO:0000318"/>
    <property type="project" value="GO_Central"/>
</dbReference>
<dbReference type="GO" id="GO:0046872">
    <property type="term" value="F:metal ion binding"/>
    <property type="evidence" value="ECO:0007669"/>
    <property type="project" value="UniProtKB-KW"/>
</dbReference>
<dbReference type="GO" id="GO:0050992">
    <property type="term" value="P:dimethylallyl diphosphate biosynthetic process"/>
    <property type="evidence" value="ECO:0007669"/>
    <property type="project" value="UniProtKB-UniRule"/>
</dbReference>
<dbReference type="GO" id="GO:0019288">
    <property type="term" value="P:isopentenyl diphosphate biosynthetic process, methylerythritol 4-phosphate pathway"/>
    <property type="evidence" value="ECO:0000318"/>
    <property type="project" value="GO_Central"/>
</dbReference>
<dbReference type="GO" id="GO:0016114">
    <property type="term" value="P:terpenoid biosynthetic process"/>
    <property type="evidence" value="ECO:0007669"/>
    <property type="project" value="UniProtKB-UniRule"/>
</dbReference>
<dbReference type="CDD" id="cd13944">
    <property type="entry name" value="lytB_ispH"/>
    <property type="match status" value="1"/>
</dbReference>
<dbReference type="FunFam" id="3.40.50.11270:FF:000001">
    <property type="entry name" value="4-hydroxy-3-methylbut-2-enyl diphosphate reductase"/>
    <property type="match status" value="1"/>
</dbReference>
<dbReference type="Gene3D" id="3.40.50.11270">
    <property type="match status" value="1"/>
</dbReference>
<dbReference type="Gene3D" id="3.40.1010.20">
    <property type="entry name" value="4-hydroxy-3-methylbut-2-enyl diphosphate reductase, catalytic domain"/>
    <property type="match status" value="2"/>
</dbReference>
<dbReference type="HAMAP" id="MF_00191">
    <property type="entry name" value="IspH"/>
    <property type="match status" value="1"/>
</dbReference>
<dbReference type="InterPro" id="IPR003451">
    <property type="entry name" value="LytB/IspH"/>
</dbReference>
<dbReference type="NCBIfam" id="TIGR00216">
    <property type="entry name" value="ispH_lytB"/>
    <property type="match status" value="1"/>
</dbReference>
<dbReference type="NCBIfam" id="NF002188">
    <property type="entry name" value="PRK01045.1-2"/>
    <property type="match status" value="1"/>
</dbReference>
<dbReference type="NCBIfam" id="NF002190">
    <property type="entry name" value="PRK01045.1-4"/>
    <property type="match status" value="1"/>
</dbReference>
<dbReference type="PANTHER" id="PTHR30426">
    <property type="entry name" value="4-HYDROXY-3-METHYLBUT-2-ENYL DIPHOSPHATE REDUCTASE"/>
    <property type="match status" value="1"/>
</dbReference>
<dbReference type="PANTHER" id="PTHR30426:SF0">
    <property type="entry name" value="4-HYDROXY-3-METHYLBUT-2-ENYL DIPHOSPHATE REDUCTASE"/>
    <property type="match status" value="1"/>
</dbReference>
<dbReference type="Pfam" id="PF02401">
    <property type="entry name" value="LYTB"/>
    <property type="match status" value="1"/>
</dbReference>
<sequence>MKIILANPRGFCAGVDRAISIVELALEIHGAPIYVRHEVVHNRFVVNGLRERGAIFVEELSEVPDGAIVIFSAHGVSQAVRQEAKDRNLKVFDATCPLVTKVHMQVARASRKGTKAILIGHKGHPEVEGTMGQYSNEDGGIFLIEKVEDIARLPMQENDNLTFMTQTTLSLDDTAETIAALKEKYPAIQGPHKNDICYATTNRQEAVRELAKLSDLVLVVGSKNSSNSNRLAELASRMGVKSQLLDEPADIQADWFNDVKTIGITAGASAPEELGQSIISRLKRFGANSIEELQGLEGNMFFEVPKELRIKEVN</sequence>
<protein>
    <recommendedName>
        <fullName evidence="1">4-hydroxy-3-methylbut-2-enyl diphosphate reductase</fullName>
        <shortName evidence="1">HMBPP reductase</shortName>
        <ecNumber evidence="1">1.17.7.4</ecNumber>
    </recommendedName>
</protein>
<proteinExistence type="inferred from homology"/>
<comment type="function">
    <text evidence="1">Catalyzes the conversion of 1-hydroxy-2-methyl-2-(E)-butenyl 4-diphosphate (HMBPP) into a mixture of isopentenyl diphosphate (IPP) and dimethylallyl diphosphate (DMAPP). Acts in the terminal step of the DOXP/MEP pathway for isoprenoid precursor biosynthesis.</text>
</comment>
<comment type="catalytic activity">
    <reaction evidence="1">
        <text>isopentenyl diphosphate + 2 oxidized [2Fe-2S]-[ferredoxin] + H2O = (2E)-4-hydroxy-3-methylbut-2-enyl diphosphate + 2 reduced [2Fe-2S]-[ferredoxin] + 2 H(+)</text>
        <dbReference type="Rhea" id="RHEA:24488"/>
        <dbReference type="Rhea" id="RHEA-COMP:10000"/>
        <dbReference type="Rhea" id="RHEA-COMP:10001"/>
        <dbReference type="ChEBI" id="CHEBI:15377"/>
        <dbReference type="ChEBI" id="CHEBI:15378"/>
        <dbReference type="ChEBI" id="CHEBI:33737"/>
        <dbReference type="ChEBI" id="CHEBI:33738"/>
        <dbReference type="ChEBI" id="CHEBI:128753"/>
        <dbReference type="ChEBI" id="CHEBI:128769"/>
        <dbReference type="EC" id="1.17.7.4"/>
    </reaction>
</comment>
<comment type="catalytic activity">
    <reaction evidence="1">
        <text>dimethylallyl diphosphate + 2 oxidized [2Fe-2S]-[ferredoxin] + H2O = (2E)-4-hydroxy-3-methylbut-2-enyl diphosphate + 2 reduced [2Fe-2S]-[ferredoxin] + 2 H(+)</text>
        <dbReference type="Rhea" id="RHEA:24825"/>
        <dbReference type="Rhea" id="RHEA-COMP:10000"/>
        <dbReference type="Rhea" id="RHEA-COMP:10001"/>
        <dbReference type="ChEBI" id="CHEBI:15377"/>
        <dbReference type="ChEBI" id="CHEBI:15378"/>
        <dbReference type="ChEBI" id="CHEBI:33737"/>
        <dbReference type="ChEBI" id="CHEBI:33738"/>
        <dbReference type="ChEBI" id="CHEBI:57623"/>
        <dbReference type="ChEBI" id="CHEBI:128753"/>
        <dbReference type="EC" id="1.17.7.4"/>
    </reaction>
</comment>
<comment type="cofactor">
    <cofactor evidence="1">
        <name>[4Fe-4S] cluster</name>
        <dbReference type="ChEBI" id="CHEBI:49883"/>
    </cofactor>
    <text evidence="1">Binds 1 [4Fe-4S] cluster per subunit.</text>
</comment>
<comment type="pathway">
    <text evidence="1">Isoprenoid biosynthesis; dimethylallyl diphosphate biosynthesis; dimethylallyl diphosphate from (2E)-4-hydroxy-3-methylbutenyl diphosphate: step 1/1.</text>
</comment>
<comment type="pathway">
    <text evidence="1">Isoprenoid biosynthesis; isopentenyl diphosphate biosynthesis via DXP pathway; isopentenyl diphosphate from 1-deoxy-D-xylulose 5-phosphate: step 6/6.</text>
</comment>
<comment type="similarity">
    <text evidence="1">Belongs to the IspH family.</text>
</comment>
<gene>
    <name evidence="1" type="primary">ispH</name>
    <name type="synonym">lytB</name>
    <name type="ordered locus">HI_1007</name>
</gene>
<accession>P44976</accession>
<feature type="chain" id="PRO_0000128824" description="4-hydroxy-3-methylbut-2-enyl diphosphate reductase">
    <location>
        <begin position="1"/>
        <end position="314"/>
    </location>
</feature>
<feature type="active site" description="Proton donor" evidence="1">
    <location>
        <position position="126"/>
    </location>
</feature>
<feature type="binding site" evidence="1">
    <location>
        <position position="12"/>
    </location>
    <ligand>
        <name>[4Fe-4S] cluster</name>
        <dbReference type="ChEBI" id="CHEBI:49883"/>
    </ligand>
</feature>
<feature type="binding site" evidence="1">
    <location>
        <position position="41"/>
    </location>
    <ligand>
        <name>(2E)-4-hydroxy-3-methylbut-2-enyl diphosphate</name>
        <dbReference type="ChEBI" id="CHEBI:128753"/>
    </ligand>
</feature>
<feature type="binding site" evidence="1">
    <location>
        <position position="41"/>
    </location>
    <ligand>
        <name>dimethylallyl diphosphate</name>
        <dbReference type="ChEBI" id="CHEBI:57623"/>
    </ligand>
</feature>
<feature type="binding site" evidence="1">
    <location>
        <position position="41"/>
    </location>
    <ligand>
        <name>isopentenyl diphosphate</name>
        <dbReference type="ChEBI" id="CHEBI:128769"/>
    </ligand>
</feature>
<feature type="binding site" evidence="1">
    <location>
        <position position="74"/>
    </location>
    <ligand>
        <name>(2E)-4-hydroxy-3-methylbut-2-enyl diphosphate</name>
        <dbReference type="ChEBI" id="CHEBI:128753"/>
    </ligand>
</feature>
<feature type="binding site" evidence="1">
    <location>
        <position position="74"/>
    </location>
    <ligand>
        <name>dimethylallyl diphosphate</name>
        <dbReference type="ChEBI" id="CHEBI:57623"/>
    </ligand>
</feature>
<feature type="binding site" evidence="1">
    <location>
        <position position="74"/>
    </location>
    <ligand>
        <name>isopentenyl diphosphate</name>
        <dbReference type="ChEBI" id="CHEBI:128769"/>
    </ligand>
</feature>
<feature type="binding site" evidence="1">
    <location>
        <position position="96"/>
    </location>
    <ligand>
        <name>[4Fe-4S] cluster</name>
        <dbReference type="ChEBI" id="CHEBI:49883"/>
    </ligand>
</feature>
<feature type="binding site" evidence="1">
    <location>
        <position position="124"/>
    </location>
    <ligand>
        <name>(2E)-4-hydroxy-3-methylbut-2-enyl diphosphate</name>
        <dbReference type="ChEBI" id="CHEBI:128753"/>
    </ligand>
</feature>
<feature type="binding site" evidence="1">
    <location>
        <position position="124"/>
    </location>
    <ligand>
        <name>dimethylallyl diphosphate</name>
        <dbReference type="ChEBI" id="CHEBI:57623"/>
    </ligand>
</feature>
<feature type="binding site" evidence="1">
    <location>
        <position position="124"/>
    </location>
    <ligand>
        <name>isopentenyl diphosphate</name>
        <dbReference type="ChEBI" id="CHEBI:128769"/>
    </ligand>
</feature>
<feature type="binding site" evidence="1">
    <location>
        <position position="167"/>
    </location>
    <ligand>
        <name>(2E)-4-hydroxy-3-methylbut-2-enyl diphosphate</name>
        <dbReference type="ChEBI" id="CHEBI:128753"/>
    </ligand>
</feature>
<feature type="binding site" evidence="1">
    <location>
        <position position="197"/>
    </location>
    <ligand>
        <name>[4Fe-4S] cluster</name>
        <dbReference type="ChEBI" id="CHEBI:49883"/>
    </ligand>
</feature>
<feature type="binding site" evidence="1">
    <location>
        <position position="225"/>
    </location>
    <ligand>
        <name>(2E)-4-hydroxy-3-methylbut-2-enyl diphosphate</name>
        <dbReference type="ChEBI" id="CHEBI:128753"/>
    </ligand>
</feature>
<feature type="binding site" evidence="1">
    <location>
        <position position="225"/>
    </location>
    <ligand>
        <name>dimethylallyl diphosphate</name>
        <dbReference type="ChEBI" id="CHEBI:57623"/>
    </ligand>
</feature>
<feature type="binding site" evidence="1">
    <location>
        <position position="225"/>
    </location>
    <ligand>
        <name>isopentenyl diphosphate</name>
        <dbReference type="ChEBI" id="CHEBI:128769"/>
    </ligand>
</feature>
<feature type="binding site" evidence="1">
    <location>
        <position position="226"/>
    </location>
    <ligand>
        <name>(2E)-4-hydroxy-3-methylbut-2-enyl diphosphate</name>
        <dbReference type="ChEBI" id="CHEBI:128753"/>
    </ligand>
</feature>
<feature type="binding site" evidence="1">
    <location>
        <position position="226"/>
    </location>
    <ligand>
        <name>dimethylallyl diphosphate</name>
        <dbReference type="ChEBI" id="CHEBI:57623"/>
    </ligand>
</feature>
<feature type="binding site" evidence="1">
    <location>
        <position position="226"/>
    </location>
    <ligand>
        <name>isopentenyl diphosphate</name>
        <dbReference type="ChEBI" id="CHEBI:128769"/>
    </ligand>
</feature>
<feature type="binding site" evidence="1">
    <location>
        <position position="227"/>
    </location>
    <ligand>
        <name>(2E)-4-hydroxy-3-methylbut-2-enyl diphosphate</name>
        <dbReference type="ChEBI" id="CHEBI:128753"/>
    </ligand>
</feature>
<feature type="binding site" evidence="1">
    <location>
        <position position="227"/>
    </location>
    <ligand>
        <name>dimethylallyl diphosphate</name>
        <dbReference type="ChEBI" id="CHEBI:57623"/>
    </ligand>
</feature>
<feature type="binding site" evidence="1">
    <location>
        <position position="227"/>
    </location>
    <ligand>
        <name>isopentenyl diphosphate</name>
        <dbReference type="ChEBI" id="CHEBI:128769"/>
    </ligand>
</feature>
<feature type="binding site" evidence="1">
    <location>
        <position position="269"/>
    </location>
    <ligand>
        <name>(2E)-4-hydroxy-3-methylbut-2-enyl diphosphate</name>
        <dbReference type="ChEBI" id="CHEBI:128753"/>
    </ligand>
</feature>
<feature type="binding site" evidence="1">
    <location>
        <position position="269"/>
    </location>
    <ligand>
        <name>dimethylallyl diphosphate</name>
        <dbReference type="ChEBI" id="CHEBI:57623"/>
    </ligand>
</feature>
<feature type="binding site" evidence="1">
    <location>
        <position position="269"/>
    </location>
    <ligand>
        <name>isopentenyl diphosphate</name>
        <dbReference type="ChEBI" id="CHEBI:128769"/>
    </ligand>
</feature>
<organism>
    <name type="scientific">Haemophilus influenzae (strain ATCC 51907 / DSM 11121 / KW20 / Rd)</name>
    <dbReference type="NCBI Taxonomy" id="71421"/>
    <lineage>
        <taxon>Bacteria</taxon>
        <taxon>Pseudomonadati</taxon>
        <taxon>Pseudomonadota</taxon>
        <taxon>Gammaproteobacteria</taxon>
        <taxon>Pasteurellales</taxon>
        <taxon>Pasteurellaceae</taxon>
        <taxon>Haemophilus</taxon>
    </lineage>
</organism>